<evidence type="ECO:0000255" key="1">
    <source>
        <dbReference type="HAMAP-Rule" id="MF_01694"/>
    </source>
</evidence>
<evidence type="ECO:0000255" key="2">
    <source>
        <dbReference type="PROSITE-ProRule" id="PRU01266"/>
    </source>
</evidence>
<feature type="chain" id="PRO_0000381259" description="Biotin synthase">
    <location>
        <begin position="1"/>
        <end position="339"/>
    </location>
</feature>
<feature type="domain" description="Radical SAM core" evidence="2">
    <location>
        <begin position="55"/>
        <end position="282"/>
    </location>
</feature>
<feature type="binding site" evidence="1">
    <location>
        <position position="70"/>
    </location>
    <ligand>
        <name>[4Fe-4S] cluster</name>
        <dbReference type="ChEBI" id="CHEBI:49883"/>
        <note>4Fe-4S-S-AdoMet</note>
    </ligand>
</feature>
<feature type="binding site" evidence="1">
    <location>
        <position position="74"/>
    </location>
    <ligand>
        <name>[4Fe-4S] cluster</name>
        <dbReference type="ChEBI" id="CHEBI:49883"/>
        <note>4Fe-4S-S-AdoMet</note>
    </ligand>
</feature>
<feature type="binding site" evidence="1">
    <location>
        <position position="77"/>
    </location>
    <ligand>
        <name>[4Fe-4S] cluster</name>
        <dbReference type="ChEBI" id="CHEBI:49883"/>
        <note>4Fe-4S-S-AdoMet</note>
    </ligand>
</feature>
<feature type="binding site" evidence="1">
    <location>
        <position position="114"/>
    </location>
    <ligand>
        <name>[2Fe-2S] cluster</name>
        <dbReference type="ChEBI" id="CHEBI:190135"/>
    </ligand>
</feature>
<feature type="binding site" evidence="1">
    <location>
        <position position="145"/>
    </location>
    <ligand>
        <name>[2Fe-2S] cluster</name>
        <dbReference type="ChEBI" id="CHEBI:190135"/>
    </ligand>
</feature>
<feature type="binding site" evidence="1">
    <location>
        <position position="205"/>
    </location>
    <ligand>
        <name>[2Fe-2S] cluster</name>
        <dbReference type="ChEBI" id="CHEBI:190135"/>
    </ligand>
</feature>
<feature type="binding site" evidence="1">
    <location>
        <position position="277"/>
    </location>
    <ligand>
        <name>[2Fe-2S] cluster</name>
        <dbReference type="ChEBI" id="CHEBI:190135"/>
    </ligand>
</feature>
<organism>
    <name type="scientific">Burkholderia orbicola (strain AU 1054)</name>
    <dbReference type="NCBI Taxonomy" id="331271"/>
    <lineage>
        <taxon>Bacteria</taxon>
        <taxon>Pseudomonadati</taxon>
        <taxon>Pseudomonadota</taxon>
        <taxon>Betaproteobacteria</taxon>
        <taxon>Burkholderiales</taxon>
        <taxon>Burkholderiaceae</taxon>
        <taxon>Burkholderia</taxon>
        <taxon>Burkholderia cepacia complex</taxon>
        <taxon>Burkholderia orbicola</taxon>
    </lineage>
</organism>
<dbReference type="EC" id="2.8.1.6" evidence="1"/>
<dbReference type="EMBL" id="CP000378">
    <property type="protein sequence ID" value="ABF77221.1"/>
    <property type="molecule type" value="Genomic_DNA"/>
</dbReference>
<dbReference type="SMR" id="Q1BT34"/>
<dbReference type="HOGENOM" id="CLU_033172_1_2_4"/>
<dbReference type="UniPathway" id="UPA00078">
    <property type="reaction ID" value="UER00162"/>
</dbReference>
<dbReference type="GO" id="GO:0051537">
    <property type="term" value="F:2 iron, 2 sulfur cluster binding"/>
    <property type="evidence" value="ECO:0007669"/>
    <property type="project" value="UniProtKB-KW"/>
</dbReference>
<dbReference type="GO" id="GO:0051539">
    <property type="term" value="F:4 iron, 4 sulfur cluster binding"/>
    <property type="evidence" value="ECO:0007669"/>
    <property type="project" value="UniProtKB-KW"/>
</dbReference>
<dbReference type="GO" id="GO:0004076">
    <property type="term" value="F:biotin synthase activity"/>
    <property type="evidence" value="ECO:0007669"/>
    <property type="project" value="UniProtKB-UniRule"/>
</dbReference>
<dbReference type="GO" id="GO:0005506">
    <property type="term" value="F:iron ion binding"/>
    <property type="evidence" value="ECO:0007669"/>
    <property type="project" value="UniProtKB-UniRule"/>
</dbReference>
<dbReference type="GO" id="GO:0009102">
    <property type="term" value="P:biotin biosynthetic process"/>
    <property type="evidence" value="ECO:0007669"/>
    <property type="project" value="UniProtKB-UniRule"/>
</dbReference>
<dbReference type="CDD" id="cd01335">
    <property type="entry name" value="Radical_SAM"/>
    <property type="match status" value="1"/>
</dbReference>
<dbReference type="FunFam" id="3.20.20.70:FF:000011">
    <property type="entry name" value="Biotin synthase"/>
    <property type="match status" value="1"/>
</dbReference>
<dbReference type="Gene3D" id="3.20.20.70">
    <property type="entry name" value="Aldolase class I"/>
    <property type="match status" value="1"/>
</dbReference>
<dbReference type="HAMAP" id="MF_01694">
    <property type="entry name" value="BioB"/>
    <property type="match status" value="1"/>
</dbReference>
<dbReference type="InterPro" id="IPR013785">
    <property type="entry name" value="Aldolase_TIM"/>
</dbReference>
<dbReference type="InterPro" id="IPR010722">
    <property type="entry name" value="BATS_dom"/>
</dbReference>
<dbReference type="InterPro" id="IPR002684">
    <property type="entry name" value="Biotin_synth/BioAB"/>
</dbReference>
<dbReference type="InterPro" id="IPR024177">
    <property type="entry name" value="Biotin_synthase"/>
</dbReference>
<dbReference type="InterPro" id="IPR006638">
    <property type="entry name" value="Elp3/MiaA/NifB-like_rSAM"/>
</dbReference>
<dbReference type="InterPro" id="IPR007197">
    <property type="entry name" value="rSAM"/>
</dbReference>
<dbReference type="NCBIfam" id="TIGR00433">
    <property type="entry name" value="bioB"/>
    <property type="match status" value="1"/>
</dbReference>
<dbReference type="PANTHER" id="PTHR22976">
    <property type="entry name" value="BIOTIN SYNTHASE"/>
    <property type="match status" value="1"/>
</dbReference>
<dbReference type="PANTHER" id="PTHR22976:SF2">
    <property type="entry name" value="BIOTIN SYNTHASE, MITOCHONDRIAL"/>
    <property type="match status" value="1"/>
</dbReference>
<dbReference type="Pfam" id="PF06968">
    <property type="entry name" value="BATS"/>
    <property type="match status" value="1"/>
</dbReference>
<dbReference type="Pfam" id="PF04055">
    <property type="entry name" value="Radical_SAM"/>
    <property type="match status" value="1"/>
</dbReference>
<dbReference type="PIRSF" id="PIRSF001619">
    <property type="entry name" value="Biotin_synth"/>
    <property type="match status" value="1"/>
</dbReference>
<dbReference type="SFLD" id="SFLDF00272">
    <property type="entry name" value="biotin_synthase"/>
    <property type="match status" value="1"/>
</dbReference>
<dbReference type="SFLD" id="SFLDG01278">
    <property type="entry name" value="biotin_synthase_like"/>
    <property type="match status" value="1"/>
</dbReference>
<dbReference type="SMART" id="SM00876">
    <property type="entry name" value="BATS"/>
    <property type="match status" value="1"/>
</dbReference>
<dbReference type="SMART" id="SM00729">
    <property type="entry name" value="Elp3"/>
    <property type="match status" value="1"/>
</dbReference>
<dbReference type="SUPFAM" id="SSF102114">
    <property type="entry name" value="Radical SAM enzymes"/>
    <property type="match status" value="1"/>
</dbReference>
<dbReference type="PROSITE" id="PS51918">
    <property type="entry name" value="RADICAL_SAM"/>
    <property type="match status" value="1"/>
</dbReference>
<comment type="function">
    <text evidence="1">Catalyzes the conversion of dethiobiotin (DTB) to biotin by the insertion of a sulfur atom into dethiobiotin via a radical-based mechanism.</text>
</comment>
<comment type="catalytic activity">
    <reaction evidence="1">
        <text>(4R,5S)-dethiobiotin + (sulfur carrier)-SH + 2 reduced [2Fe-2S]-[ferredoxin] + 2 S-adenosyl-L-methionine = (sulfur carrier)-H + biotin + 2 5'-deoxyadenosine + 2 L-methionine + 2 oxidized [2Fe-2S]-[ferredoxin]</text>
        <dbReference type="Rhea" id="RHEA:22060"/>
        <dbReference type="Rhea" id="RHEA-COMP:10000"/>
        <dbReference type="Rhea" id="RHEA-COMP:10001"/>
        <dbReference type="Rhea" id="RHEA-COMP:14737"/>
        <dbReference type="Rhea" id="RHEA-COMP:14739"/>
        <dbReference type="ChEBI" id="CHEBI:17319"/>
        <dbReference type="ChEBI" id="CHEBI:29917"/>
        <dbReference type="ChEBI" id="CHEBI:33737"/>
        <dbReference type="ChEBI" id="CHEBI:33738"/>
        <dbReference type="ChEBI" id="CHEBI:57586"/>
        <dbReference type="ChEBI" id="CHEBI:57844"/>
        <dbReference type="ChEBI" id="CHEBI:59789"/>
        <dbReference type="ChEBI" id="CHEBI:64428"/>
        <dbReference type="ChEBI" id="CHEBI:149473"/>
        <dbReference type="EC" id="2.8.1.6"/>
    </reaction>
</comment>
<comment type="cofactor">
    <cofactor evidence="1">
        <name>[4Fe-4S] cluster</name>
        <dbReference type="ChEBI" id="CHEBI:49883"/>
    </cofactor>
    <text evidence="1">Binds 1 [4Fe-4S] cluster. The cluster is coordinated with 3 cysteines and an exchangeable S-adenosyl-L-methionine.</text>
</comment>
<comment type="cofactor">
    <cofactor evidence="1">
        <name>[2Fe-2S] cluster</name>
        <dbReference type="ChEBI" id="CHEBI:190135"/>
    </cofactor>
    <text evidence="1">Binds 1 [2Fe-2S] cluster. The cluster is coordinated with 3 cysteines and 1 arginine.</text>
</comment>
<comment type="pathway">
    <text evidence="1">Cofactor biosynthesis; biotin biosynthesis; biotin from 7,8-diaminononanoate: step 2/2.</text>
</comment>
<comment type="subunit">
    <text evidence="1">Homodimer.</text>
</comment>
<comment type="similarity">
    <text evidence="1">Belongs to the radical SAM superfamily. Biotin synthase family.</text>
</comment>
<sequence length="339" mass="37014">MTQAQTAAVQPAAIPVAAPASQRWRVADVVALFELPFNDLMFRAQQVHREHFDANAVQLSTLLSIKTGGCEEDCGYCSQSSHHDTGLKAEKLMDVDTVLDAARAAKANGASRFCMGAAWRNPKERHMPALTEMVRGVKELGLETCMTLGMLEDEQAQQLADAGLDYYNHNLDTSPEFYGQVISTRTYQDRLDTLDRVRDAGINVCCGGIIGMGESRRERAGLISQLANLNPYPESVPINNLVAIEGTPLEGTAPLDPFEFVRTIAVARITMPKAVVRLSAGREQLDDAMQAMCFLAGANSMFYGDQLLTTSNPQTQRDRALFERLGIRASQADALSDNA</sequence>
<reference key="1">
    <citation type="submission" date="2006-05" db="EMBL/GenBank/DDBJ databases">
        <title>Complete sequence of chromosome 1 of Burkholderia cenocepacia AU 1054.</title>
        <authorList>
            <consortium name="US DOE Joint Genome Institute"/>
            <person name="Copeland A."/>
            <person name="Lucas S."/>
            <person name="Lapidus A."/>
            <person name="Barry K."/>
            <person name="Detter J.C."/>
            <person name="Glavina del Rio T."/>
            <person name="Hammon N."/>
            <person name="Israni S."/>
            <person name="Dalin E."/>
            <person name="Tice H."/>
            <person name="Pitluck S."/>
            <person name="Chain P."/>
            <person name="Malfatti S."/>
            <person name="Shin M."/>
            <person name="Vergez L."/>
            <person name="Schmutz J."/>
            <person name="Larimer F."/>
            <person name="Land M."/>
            <person name="Hauser L."/>
            <person name="Kyrpides N."/>
            <person name="Lykidis A."/>
            <person name="LiPuma J.J."/>
            <person name="Konstantinidis K."/>
            <person name="Tiedje J.M."/>
            <person name="Richardson P."/>
        </authorList>
    </citation>
    <scope>NUCLEOTIDE SEQUENCE [LARGE SCALE GENOMIC DNA]</scope>
    <source>
        <strain>AU 1054</strain>
    </source>
</reference>
<proteinExistence type="inferred from homology"/>
<gene>
    <name evidence="1" type="primary">bioB</name>
    <name type="ordered locus">Bcen_2320</name>
</gene>
<keyword id="KW-0001">2Fe-2S</keyword>
<keyword id="KW-0004">4Fe-4S</keyword>
<keyword id="KW-0093">Biotin biosynthesis</keyword>
<keyword id="KW-0408">Iron</keyword>
<keyword id="KW-0411">Iron-sulfur</keyword>
<keyword id="KW-0479">Metal-binding</keyword>
<keyword id="KW-0949">S-adenosyl-L-methionine</keyword>
<keyword id="KW-0808">Transferase</keyword>
<accession>Q1BT34</accession>
<name>BIOB_BURO1</name>
<protein>
    <recommendedName>
        <fullName evidence="1">Biotin synthase</fullName>
        <ecNumber evidence="1">2.8.1.6</ecNumber>
    </recommendedName>
</protein>